<gene>
    <name evidence="1" type="primary">hisS</name>
    <name type="ordered locus">LSEI_1527</name>
</gene>
<sequence length="427" mass="47565">MNYQRPKGTADILPGQSERWQQVEAVARKIFAQYQYHEIRTPIFENVDVFSRSAGDTSDIVTKEMYTFKDKGDRMMALRPEGTAGVVRAYVENKLYGPEHAKPYKVYYLGPMFRYERPQSGRQRQFHQIGVEAFGSDSPVLDAETLALAKQLLEALGAKHLKFVINSLGDPATRKAFHAALVDYLTPFKDQLSEDSKVRLVKNPLRILDSKDKHDQEIVANAPSILDYLTPEAQQHFDRVKTLLQGLGIPFEVDATMVRGLDYYNHTIFEVMSDDKVFGGGYTTILAGGRYNGLVEELGGPETPGIGFAMGVERLMLLMQGELPTAQPDAYIVTIDQGADQEALQMLTAIRQQGFTGEMDYMGRKPKGQFKAANKANAKLVLTIGESERAAGTVQIKNMATGDQQAFPQADVLADFGKIYTQVMEAK</sequence>
<evidence type="ECO:0000255" key="1">
    <source>
        <dbReference type="HAMAP-Rule" id="MF_00127"/>
    </source>
</evidence>
<organism>
    <name type="scientific">Lacticaseibacillus paracasei (strain ATCC 334 / BCRC 17002 / CCUG 31169 / CIP 107868 / KCTC 3260 / NRRL B-441)</name>
    <name type="common">Lactobacillus paracasei</name>
    <dbReference type="NCBI Taxonomy" id="321967"/>
    <lineage>
        <taxon>Bacteria</taxon>
        <taxon>Bacillati</taxon>
        <taxon>Bacillota</taxon>
        <taxon>Bacilli</taxon>
        <taxon>Lactobacillales</taxon>
        <taxon>Lactobacillaceae</taxon>
        <taxon>Lacticaseibacillus</taxon>
    </lineage>
</organism>
<dbReference type="EC" id="6.1.1.21" evidence="1"/>
<dbReference type="EMBL" id="CP000423">
    <property type="protein sequence ID" value="ABJ70302.1"/>
    <property type="molecule type" value="Genomic_DNA"/>
</dbReference>
<dbReference type="RefSeq" id="WP_003594587.1">
    <property type="nucleotide sequence ID" value="NC_008526.1"/>
</dbReference>
<dbReference type="RefSeq" id="YP_806744.1">
    <property type="nucleotide sequence ID" value="NC_008526.1"/>
</dbReference>
<dbReference type="SMR" id="Q038S0"/>
<dbReference type="STRING" id="321967.LSEI_1527"/>
<dbReference type="PaxDb" id="321967-LSEI_1527"/>
<dbReference type="KEGG" id="lca:LSEI_1527"/>
<dbReference type="PATRIC" id="fig|321967.11.peg.1509"/>
<dbReference type="HOGENOM" id="CLU_025113_1_1_9"/>
<dbReference type="Proteomes" id="UP000001651">
    <property type="component" value="Chromosome"/>
</dbReference>
<dbReference type="GO" id="GO:0005737">
    <property type="term" value="C:cytoplasm"/>
    <property type="evidence" value="ECO:0007669"/>
    <property type="project" value="UniProtKB-SubCell"/>
</dbReference>
<dbReference type="GO" id="GO:0005524">
    <property type="term" value="F:ATP binding"/>
    <property type="evidence" value="ECO:0007669"/>
    <property type="project" value="UniProtKB-UniRule"/>
</dbReference>
<dbReference type="GO" id="GO:0140096">
    <property type="term" value="F:catalytic activity, acting on a protein"/>
    <property type="evidence" value="ECO:0007669"/>
    <property type="project" value="UniProtKB-ARBA"/>
</dbReference>
<dbReference type="GO" id="GO:0004821">
    <property type="term" value="F:histidine-tRNA ligase activity"/>
    <property type="evidence" value="ECO:0007669"/>
    <property type="project" value="UniProtKB-UniRule"/>
</dbReference>
<dbReference type="GO" id="GO:0016740">
    <property type="term" value="F:transferase activity"/>
    <property type="evidence" value="ECO:0007669"/>
    <property type="project" value="UniProtKB-ARBA"/>
</dbReference>
<dbReference type="GO" id="GO:0006427">
    <property type="term" value="P:histidyl-tRNA aminoacylation"/>
    <property type="evidence" value="ECO:0007669"/>
    <property type="project" value="UniProtKB-UniRule"/>
</dbReference>
<dbReference type="CDD" id="cd00773">
    <property type="entry name" value="HisRS-like_core"/>
    <property type="match status" value="1"/>
</dbReference>
<dbReference type="CDD" id="cd00859">
    <property type="entry name" value="HisRS_anticodon"/>
    <property type="match status" value="1"/>
</dbReference>
<dbReference type="FunFam" id="3.30.930.10:FF:000005">
    <property type="entry name" value="Histidine--tRNA ligase"/>
    <property type="match status" value="1"/>
</dbReference>
<dbReference type="Gene3D" id="3.40.50.800">
    <property type="entry name" value="Anticodon-binding domain"/>
    <property type="match status" value="1"/>
</dbReference>
<dbReference type="Gene3D" id="3.30.930.10">
    <property type="entry name" value="Bira Bifunctional Protein, Domain 2"/>
    <property type="match status" value="1"/>
</dbReference>
<dbReference type="HAMAP" id="MF_00127">
    <property type="entry name" value="His_tRNA_synth"/>
    <property type="match status" value="1"/>
</dbReference>
<dbReference type="InterPro" id="IPR006195">
    <property type="entry name" value="aa-tRNA-synth_II"/>
</dbReference>
<dbReference type="InterPro" id="IPR045864">
    <property type="entry name" value="aa-tRNA-synth_II/BPL/LPL"/>
</dbReference>
<dbReference type="InterPro" id="IPR004154">
    <property type="entry name" value="Anticodon-bd"/>
</dbReference>
<dbReference type="InterPro" id="IPR036621">
    <property type="entry name" value="Anticodon-bd_dom_sf"/>
</dbReference>
<dbReference type="InterPro" id="IPR015807">
    <property type="entry name" value="His-tRNA-ligase"/>
</dbReference>
<dbReference type="InterPro" id="IPR041715">
    <property type="entry name" value="HisRS-like_core"/>
</dbReference>
<dbReference type="InterPro" id="IPR004516">
    <property type="entry name" value="HisRS/HisZ"/>
</dbReference>
<dbReference type="InterPro" id="IPR033656">
    <property type="entry name" value="HisRS_anticodon"/>
</dbReference>
<dbReference type="NCBIfam" id="TIGR00442">
    <property type="entry name" value="hisS"/>
    <property type="match status" value="1"/>
</dbReference>
<dbReference type="PANTHER" id="PTHR43707:SF1">
    <property type="entry name" value="HISTIDINE--TRNA LIGASE, MITOCHONDRIAL-RELATED"/>
    <property type="match status" value="1"/>
</dbReference>
<dbReference type="PANTHER" id="PTHR43707">
    <property type="entry name" value="HISTIDYL-TRNA SYNTHETASE"/>
    <property type="match status" value="1"/>
</dbReference>
<dbReference type="Pfam" id="PF03129">
    <property type="entry name" value="HGTP_anticodon"/>
    <property type="match status" value="1"/>
</dbReference>
<dbReference type="Pfam" id="PF13393">
    <property type="entry name" value="tRNA-synt_His"/>
    <property type="match status" value="1"/>
</dbReference>
<dbReference type="PIRSF" id="PIRSF001549">
    <property type="entry name" value="His-tRNA_synth"/>
    <property type="match status" value="1"/>
</dbReference>
<dbReference type="SUPFAM" id="SSF52954">
    <property type="entry name" value="Class II aaRS ABD-related"/>
    <property type="match status" value="1"/>
</dbReference>
<dbReference type="SUPFAM" id="SSF55681">
    <property type="entry name" value="Class II aaRS and biotin synthetases"/>
    <property type="match status" value="1"/>
</dbReference>
<dbReference type="PROSITE" id="PS50862">
    <property type="entry name" value="AA_TRNA_LIGASE_II"/>
    <property type="match status" value="1"/>
</dbReference>
<accession>Q038S0</accession>
<protein>
    <recommendedName>
        <fullName evidence="1">Histidine--tRNA ligase</fullName>
        <ecNumber evidence="1">6.1.1.21</ecNumber>
    </recommendedName>
    <alternativeName>
        <fullName evidence="1">Histidyl-tRNA synthetase</fullName>
        <shortName evidence="1">HisRS</shortName>
    </alternativeName>
</protein>
<feature type="chain" id="PRO_1000016376" description="Histidine--tRNA ligase">
    <location>
        <begin position="1"/>
        <end position="427"/>
    </location>
</feature>
<name>SYH_LACP3</name>
<proteinExistence type="inferred from homology"/>
<reference key="1">
    <citation type="journal article" date="2006" name="Proc. Natl. Acad. Sci. U.S.A.">
        <title>Comparative genomics of the lactic acid bacteria.</title>
        <authorList>
            <person name="Makarova K.S."/>
            <person name="Slesarev A."/>
            <person name="Wolf Y.I."/>
            <person name="Sorokin A."/>
            <person name="Mirkin B."/>
            <person name="Koonin E.V."/>
            <person name="Pavlov A."/>
            <person name="Pavlova N."/>
            <person name="Karamychev V."/>
            <person name="Polouchine N."/>
            <person name="Shakhova V."/>
            <person name="Grigoriev I."/>
            <person name="Lou Y."/>
            <person name="Rohksar D."/>
            <person name="Lucas S."/>
            <person name="Huang K."/>
            <person name="Goodstein D.M."/>
            <person name="Hawkins T."/>
            <person name="Plengvidhya V."/>
            <person name="Welker D."/>
            <person name="Hughes J."/>
            <person name="Goh Y."/>
            <person name="Benson A."/>
            <person name="Baldwin K."/>
            <person name="Lee J.-H."/>
            <person name="Diaz-Muniz I."/>
            <person name="Dosti B."/>
            <person name="Smeianov V."/>
            <person name="Wechter W."/>
            <person name="Barabote R."/>
            <person name="Lorca G."/>
            <person name="Altermann E."/>
            <person name="Barrangou R."/>
            <person name="Ganesan B."/>
            <person name="Xie Y."/>
            <person name="Rawsthorne H."/>
            <person name="Tamir D."/>
            <person name="Parker C."/>
            <person name="Breidt F."/>
            <person name="Broadbent J.R."/>
            <person name="Hutkins R."/>
            <person name="O'Sullivan D."/>
            <person name="Steele J."/>
            <person name="Unlu G."/>
            <person name="Saier M.H. Jr."/>
            <person name="Klaenhammer T."/>
            <person name="Richardson P."/>
            <person name="Kozyavkin S."/>
            <person name="Weimer B.C."/>
            <person name="Mills D.A."/>
        </authorList>
    </citation>
    <scope>NUCLEOTIDE SEQUENCE [LARGE SCALE GENOMIC DNA]</scope>
    <source>
        <strain>ATCC 334 / BCRC 17002 / CCUG 31169 / CIP 107868 / KCTC 3260 / NRRL B-441</strain>
    </source>
</reference>
<keyword id="KW-0030">Aminoacyl-tRNA synthetase</keyword>
<keyword id="KW-0067">ATP-binding</keyword>
<keyword id="KW-0963">Cytoplasm</keyword>
<keyword id="KW-0436">Ligase</keyword>
<keyword id="KW-0547">Nucleotide-binding</keyword>
<keyword id="KW-0648">Protein biosynthesis</keyword>
<keyword id="KW-1185">Reference proteome</keyword>
<comment type="catalytic activity">
    <reaction evidence="1">
        <text>tRNA(His) + L-histidine + ATP = L-histidyl-tRNA(His) + AMP + diphosphate + H(+)</text>
        <dbReference type="Rhea" id="RHEA:17313"/>
        <dbReference type="Rhea" id="RHEA-COMP:9665"/>
        <dbReference type="Rhea" id="RHEA-COMP:9689"/>
        <dbReference type="ChEBI" id="CHEBI:15378"/>
        <dbReference type="ChEBI" id="CHEBI:30616"/>
        <dbReference type="ChEBI" id="CHEBI:33019"/>
        <dbReference type="ChEBI" id="CHEBI:57595"/>
        <dbReference type="ChEBI" id="CHEBI:78442"/>
        <dbReference type="ChEBI" id="CHEBI:78527"/>
        <dbReference type="ChEBI" id="CHEBI:456215"/>
        <dbReference type="EC" id="6.1.1.21"/>
    </reaction>
</comment>
<comment type="subunit">
    <text evidence="1">Homodimer.</text>
</comment>
<comment type="subcellular location">
    <subcellularLocation>
        <location evidence="1">Cytoplasm</location>
    </subcellularLocation>
</comment>
<comment type="similarity">
    <text evidence="1">Belongs to the class-II aminoacyl-tRNA synthetase family.</text>
</comment>